<sequence>MSILETFDPQVAEAIRHETERQEYNLELIASENFVSEAVLEAQGSVMTNKYAEGYPGKRYYGGCHHVDVVENLAIERAKELFGADHANVQPHSGSQANMAVYFSVLKPGDTILGMNLSHGGHLTHGSPVNFSGRFFNVVPYGVSQETETIDFNEVERLALEHKPKMIVVGASAYPRTIDFAAFRIIADKVGAVIMVDMAHIAGLVAAGLHPSPVPYAEFVTTTTHKTLRGPRGGMILCREEYAKTLNSNIFPGIQGGPLMHVIAAKAVALKEALQPEFKAYQAQIVKNAKALADELVKRGFRLVSGGTDNHLMLVNLTGTELTGKVAEESLDKAGITVNKNTVPFETRSPFVTSGFRIGTPAATTHGLKEAEMADVAGFIAEALANVDNDAKLAEIKGRVNVLMKRFPLYAHRLS</sequence>
<dbReference type="EC" id="2.1.2.1" evidence="1"/>
<dbReference type="EMBL" id="AE017180">
    <property type="protein sequence ID" value="AAR34981.1"/>
    <property type="molecule type" value="Genomic_DNA"/>
</dbReference>
<dbReference type="RefSeq" id="NP_952658.1">
    <property type="nucleotide sequence ID" value="NC_002939.5"/>
</dbReference>
<dbReference type="RefSeq" id="WP_010942252.1">
    <property type="nucleotide sequence ID" value="NC_002939.5"/>
</dbReference>
<dbReference type="SMR" id="Q74CR5"/>
<dbReference type="FunCoup" id="Q74CR5">
    <property type="interactions" value="566"/>
</dbReference>
<dbReference type="STRING" id="243231.GSU1607"/>
<dbReference type="EnsemblBacteria" id="AAR34981">
    <property type="protein sequence ID" value="AAR34981"/>
    <property type="gene ID" value="GSU1607"/>
</dbReference>
<dbReference type="KEGG" id="gsu:GSU1607"/>
<dbReference type="PATRIC" id="fig|243231.5.peg.1649"/>
<dbReference type="eggNOG" id="COG0112">
    <property type="taxonomic scope" value="Bacteria"/>
</dbReference>
<dbReference type="HOGENOM" id="CLU_022477_2_1_7"/>
<dbReference type="InParanoid" id="Q74CR5"/>
<dbReference type="OrthoDB" id="9803846at2"/>
<dbReference type="UniPathway" id="UPA00193"/>
<dbReference type="UniPathway" id="UPA00288">
    <property type="reaction ID" value="UER01023"/>
</dbReference>
<dbReference type="Proteomes" id="UP000000577">
    <property type="component" value="Chromosome"/>
</dbReference>
<dbReference type="GO" id="GO:0005737">
    <property type="term" value="C:cytoplasm"/>
    <property type="evidence" value="ECO:0000318"/>
    <property type="project" value="GO_Central"/>
</dbReference>
<dbReference type="GO" id="GO:0005829">
    <property type="term" value="C:cytosol"/>
    <property type="evidence" value="ECO:0000318"/>
    <property type="project" value="GO_Central"/>
</dbReference>
<dbReference type="GO" id="GO:0004372">
    <property type="term" value="F:glycine hydroxymethyltransferase activity"/>
    <property type="evidence" value="ECO:0000318"/>
    <property type="project" value="GO_Central"/>
</dbReference>
<dbReference type="GO" id="GO:0030170">
    <property type="term" value="F:pyridoxal phosphate binding"/>
    <property type="evidence" value="ECO:0000318"/>
    <property type="project" value="GO_Central"/>
</dbReference>
<dbReference type="GO" id="GO:0019264">
    <property type="term" value="P:glycine biosynthetic process from serine"/>
    <property type="evidence" value="ECO:0000318"/>
    <property type="project" value="GO_Central"/>
</dbReference>
<dbReference type="GO" id="GO:0035999">
    <property type="term" value="P:tetrahydrofolate interconversion"/>
    <property type="evidence" value="ECO:0007669"/>
    <property type="project" value="UniProtKB-UniRule"/>
</dbReference>
<dbReference type="GO" id="GO:0046653">
    <property type="term" value="P:tetrahydrofolate metabolic process"/>
    <property type="evidence" value="ECO:0000318"/>
    <property type="project" value="GO_Central"/>
</dbReference>
<dbReference type="CDD" id="cd00378">
    <property type="entry name" value="SHMT"/>
    <property type="match status" value="1"/>
</dbReference>
<dbReference type="FunFam" id="3.40.640.10:FF:000001">
    <property type="entry name" value="Serine hydroxymethyltransferase"/>
    <property type="match status" value="1"/>
</dbReference>
<dbReference type="FunFam" id="3.90.1150.10:FF:000003">
    <property type="entry name" value="Serine hydroxymethyltransferase"/>
    <property type="match status" value="1"/>
</dbReference>
<dbReference type="Gene3D" id="3.90.1150.10">
    <property type="entry name" value="Aspartate Aminotransferase, domain 1"/>
    <property type="match status" value="1"/>
</dbReference>
<dbReference type="Gene3D" id="3.40.640.10">
    <property type="entry name" value="Type I PLP-dependent aspartate aminotransferase-like (Major domain)"/>
    <property type="match status" value="1"/>
</dbReference>
<dbReference type="HAMAP" id="MF_00051">
    <property type="entry name" value="SHMT"/>
    <property type="match status" value="1"/>
</dbReference>
<dbReference type="InterPro" id="IPR015424">
    <property type="entry name" value="PyrdxlP-dep_Trfase"/>
</dbReference>
<dbReference type="InterPro" id="IPR015421">
    <property type="entry name" value="PyrdxlP-dep_Trfase_major"/>
</dbReference>
<dbReference type="InterPro" id="IPR015422">
    <property type="entry name" value="PyrdxlP-dep_Trfase_small"/>
</dbReference>
<dbReference type="InterPro" id="IPR001085">
    <property type="entry name" value="Ser_HO-MeTrfase"/>
</dbReference>
<dbReference type="InterPro" id="IPR049943">
    <property type="entry name" value="Ser_HO-MeTrfase-like"/>
</dbReference>
<dbReference type="InterPro" id="IPR019798">
    <property type="entry name" value="Ser_HO-MeTrfase_PLP_BS"/>
</dbReference>
<dbReference type="InterPro" id="IPR039429">
    <property type="entry name" value="SHMT-like_dom"/>
</dbReference>
<dbReference type="NCBIfam" id="NF000586">
    <property type="entry name" value="PRK00011.1"/>
    <property type="match status" value="1"/>
</dbReference>
<dbReference type="PANTHER" id="PTHR11680">
    <property type="entry name" value="SERINE HYDROXYMETHYLTRANSFERASE"/>
    <property type="match status" value="1"/>
</dbReference>
<dbReference type="PANTHER" id="PTHR11680:SF50">
    <property type="entry name" value="SERINE HYDROXYMETHYLTRANSFERASE"/>
    <property type="match status" value="1"/>
</dbReference>
<dbReference type="Pfam" id="PF00464">
    <property type="entry name" value="SHMT"/>
    <property type="match status" value="1"/>
</dbReference>
<dbReference type="PIRSF" id="PIRSF000412">
    <property type="entry name" value="SHMT"/>
    <property type="match status" value="1"/>
</dbReference>
<dbReference type="SUPFAM" id="SSF53383">
    <property type="entry name" value="PLP-dependent transferases"/>
    <property type="match status" value="1"/>
</dbReference>
<dbReference type="PROSITE" id="PS00096">
    <property type="entry name" value="SHMT"/>
    <property type="match status" value="1"/>
</dbReference>
<protein>
    <recommendedName>
        <fullName evidence="1">Serine hydroxymethyltransferase</fullName>
        <shortName evidence="1">SHMT</shortName>
        <shortName evidence="1">Serine methylase</shortName>
        <ecNumber evidence="1">2.1.2.1</ecNumber>
    </recommendedName>
</protein>
<reference key="1">
    <citation type="journal article" date="2003" name="Science">
        <title>Genome of Geobacter sulfurreducens: metal reduction in subsurface environments.</title>
        <authorList>
            <person name="Methe B.A."/>
            <person name="Nelson K.E."/>
            <person name="Eisen J.A."/>
            <person name="Paulsen I.T."/>
            <person name="Nelson W.C."/>
            <person name="Heidelberg J.F."/>
            <person name="Wu D."/>
            <person name="Wu M."/>
            <person name="Ward N.L."/>
            <person name="Beanan M.J."/>
            <person name="Dodson R.J."/>
            <person name="Madupu R."/>
            <person name="Brinkac L.M."/>
            <person name="Daugherty S.C."/>
            <person name="DeBoy R.T."/>
            <person name="Durkin A.S."/>
            <person name="Gwinn M.L."/>
            <person name="Kolonay J.F."/>
            <person name="Sullivan S.A."/>
            <person name="Haft D.H."/>
            <person name="Selengut J."/>
            <person name="Davidsen T.M."/>
            <person name="Zafar N."/>
            <person name="White O."/>
            <person name="Tran B."/>
            <person name="Romero C."/>
            <person name="Forberger H.A."/>
            <person name="Weidman J.F."/>
            <person name="Khouri H.M."/>
            <person name="Feldblyum T.V."/>
            <person name="Utterback T.R."/>
            <person name="Van Aken S.E."/>
            <person name="Lovley D.R."/>
            <person name="Fraser C.M."/>
        </authorList>
    </citation>
    <scope>NUCLEOTIDE SEQUENCE [LARGE SCALE GENOMIC DNA]</scope>
    <source>
        <strain>ATCC 51573 / DSM 12127 / PCA</strain>
    </source>
</reference>
<evidence type="ECO:0000255" key="1">
    <source>
        <dbReference type="HAMAP-Rule" id="MF_00051"/>
    </source>
</evidence>
<gene>
    <name evidence="1" type="primary">glyA</name>
    <name type="ordered locus">GSU1607</name>
</gene>
<name>GLYA_GEOSL</name>
<proteinExistence type="inferred from homology"/>
<keyword id="KW-0028">Amino-acid biosynthesis</keyword>
<keyword id="KW-0963">Cytoplasm</keyword>
<keyword id="KW-0554">One-carbon metabolism</keyword>
<keyword id="KW-0663">Pyridoxal phosphate</keyword>
<keyword id="KW-1185">Reference proteome</keyword>
<keyword id="KW-0808">Transferase</keyword>
<comment type="function">
    <text evidence="1">Catalyzes the reversible interconversion of serine and glycine with tetrahydrofolate (THF) serving as the one-carbon carrier. This reaction serves as the major source of one-carbon groups required for the biosynthesis of purines, thymidylate, methionine, and other important biomolecules. Also exhibits THF-independent aldolase activity toward beta-hydroxyamino acids, producing glycine and aldehydes, via a retro-aldol mechanism.</text>
</comment>
<comment type="catalytic activity">
    <reaction evidence="1">
        <text>(6R)-5,10-methylene-5,6,7,8-tetrahydrofolate + glycine + H2O = (6S)-5,6,7,8-tetrahydrofolate + L-serine</text>
        <dbReference type="Rhea" id="RHEA:15481"/>
        <dbReference type="ChEBI" id="CHEBI:15377"/>
        <dbReference type="ChEBI" id="CHEBI:15636"/>
        <dbReference type="ChEBI" id="CHEBI:33384"/>
        <dbReference type="ChEBI" id="CHEBI:57305"/>
        <dbReference type="ChEBI" id="CHEBI:57453"/>
        <dbReference type="EC" id="2.1.2.1"/>
    </reaction>
</comment>
<comment type="cofactor">
    <cofactor evidence="1">
        <name>pyridoxal 5'-phosphate</name>
        <dbReference type="ChEBI" id="CHEBI:597326"/>
    </cofactor>
</comment>
<comment type="pathway">
    <text evidence="1">One-carbon metabolism; tetrahydrofolate interconversion.</text>
</comment>
<comment type="pathway">
    <text evidence="1">Amino-acid biosynthesis; glycine biosynthesis; glycine from L-serine: step 1/1.</text>
</comment>
<comment type="subunit">
    <text evidence="1">Homodimer.</text>
</comment>
<comment type="subcellular location">
    <subcellularLocation>
        <location evidence="1">Cytoplasm</location>
    </subcellularLocation>
</comment>
<comment type="similarity">
    <text evidence="1">Belongs to the SHMT family.</text>
</comment>
<feature type="chain" id="PRO_0000113581" description="Serine hydroxymethyltransferase">
    <location>
        <begin position="1"/>
        <end position="415"/>
    </location>
</feature>
<feature type="binding site" evidence="1">
    <location>
        <position position="117"/>
    </location>
    <ligand>
        <name>(6S)-5,6,7,8-tetrahydrofolate</name>
        <dbReference type="ChEBI" id="CHEBI:57453"/>
    </ligand>
</feature>
<feature type="binding site" evidence="1">
    <location>
        <begin position="121"/>
        <end position="123"/>
    </location>
    <ligand>
        <name>(6S)-5,6,7,8-tetrahydrofolate</name>
        <dbReference type="ChEBI" id="CHEBI:57453"/>
    </ligand>
</feature>
<feature type="binding site" evidence="1">
    <location>
        <position position="241"/>
    </location>
    <ligand>
        <name>(6S)-5,6,7,8-tetrahydrofolate</name>
        <dbReference type="ChEBI" id="CHEBI:57453"/>
    </ligand>
</feature>
<feature type="binding site" evidence="1">
    <location>
        <begin position="349"/>
        <end position="351"/>
    </location>
    <ligand>
        <name>(6S)-5,6,7,8-tetrahydrofolate</name>
        <dbReference type="ChEBI" id="CHEBI:57453"/>
    </ligand>
</feature>
<feature type="site" description="Plays an important role in substrate specificity" evidence="1">
    <location>
        <position position="225"/>
    </location>
</feature>
<feature type="modified residue" description="N6-(pyridoxal phosphate)lysine" evidence="1">
    <location>
        <position position="226"/>
    </location>
</feature>
<organism>
    <name type="scientific">Geobacter sulfurreducens (strain ATCC 51573 / DSM 12127 / PCA)</name>
    <dbReference type="NCBI Taxonomy" id="243231"/>
    <lineage>
        <taxon>Bacteria</taxon>
        <taxon>Pseudomonadati</taxon>
        <taxon>Thermodesulfobacteriota</taxon>
        <taxon>Desulfuromonadia</taxon>
        <taxon>Geobacterales</taxon>
        <taxon>Geobacteraceae</taxon>
        <taxon>Geobacter</taxon>
    </lineage>
</organism>
<accession>Q74CR5</accession>